<comment type="function">
    <text evidence="1">Catalyzes the deamination of dCTP to dUTP.</text>
</comment>
<comment type="catalytic activity">
    <reaction evidence="1">
        <text>dCTP + H2O + H(+) = dUTP + NH4(+)</text>
        <dbReference type="Rhea" id="RHEA:22680"/>
        <dbReference type="ChEBI" id="CHEBI:15377"/>
        <dbReference type="ChEBI" id="CHEBI:15378"/>
        <dbReference type="ChEBI" id="CHEBI:28938"/>
        <dbReference type="ChEBI" id="CHEBI:61481"/>
        <dbReference type="ChEBI" id="CHEBI:61555"/>
        <dbReference type="EC" id="3.5.4.13"/>
    </reaction>
</comment>
<comment type="pathway">
    <text evidence="1">Pyrimidine metabolism; dUMP biosynthesis; dUMP from dCTP (dUTP route): step 1/2.</text>
</comment>
<comment type="subunit">
    <text evidence="1">Homotrimer.</text>
</comment>
<comment type="similarity">
    <text evidence="1">Belongs to the dCTP deaminase family.</text>
</comment>
<comment type="sequence caution" evidence="2">
    <conflict type="erroneous initiation">
        <sequence resource="EMBL-CDS" id="AAD07441"/>
    </conflict>
</comment>
<keyword id="KW-0378">Hydrolase</keyword>
<keyword id="KW-0546">Nucleotide metabolism</keyword>
<keyword id="KW-0547">Nucleotide-binding</keyword>
<keyword id="KW-1185">Reference proteome</keyword>
<gene>
    <name evidence="1" type="primary">dcd</name>
    <name type="ordered locus">HP_0372</name>
</gene>
<sequence length="188" mass="20904">MGLKADSWIKKMSLEHGMISPFCEKQVGKNVISYGLSSYGYDIRVGSEFMLFDNKNALIDPKNFDPNNATKIDASKEGYFILPANAFALAHTIEYFKMPKDTLAICLGKSTYARCGIIVNVTPFEPEFEGYITIEISNTTNLPAKVYANEGIAQVVFLQGDEMCEQSYKDRGGKYQGQVGITLPKILK</sequence>
<protein>
    <recommendedName>
        <fullName evidence="1">dCTP deaminase</fullName>
        <ecNumber evidence="1">3.5.4.13</ecNumber>
    </recommendedName>
    <alternativeName>
        <fullName evidence="1">Deoxycytidine triphosphate deaminase</fullName>
    </alternativeName>
</protein>
<name>DCD_HELPY</name>
<organism>
    <name type="scientific">Helicobacter pylori (strain ATCC 700392 / 26695)</name>
    <name type="common">Campylobacter pylori</name>
    <dbReference type="NCBI Taxonomy" id="85962"/>
    <lineage>
        <taxon>Bacteria</taxon>
        <taxon>Pseudomonadati</taxon>
        <taxon>Campylobacterota</taxon>
        <taxon>Epsilonproteobacteria</taxon>
        <taxon>Campylobacterales</taxon>
        <taxon>Helicobacteraceae</taxon>
        <taxon>Helicobacter</taxon>
    </lineage>
</organism>
<dbReference type="EC" id="3.5.4.13" evidence="1"/>
<dbReference type="EMBL" id="AE000511">
    <property type="protein sequence ID" value="AAD07441.1"/>
    <property type="status" value="ALT_INIT"/>
    <property type="molecule type" value="Genomic_DNA"/>
</dbReference>
<dbReference type="PIR" id="D64566">
    <property type="entry name" value="D64566"/>
</dbReference>
<dbReference type="RefSeq" id="NP_207170.1">
    <property type="nucleotide sequence ID" value="NC_000915.1"/>
</dbReference>
<dbReference type="RefSeq" id="WP_000523106.1">
    <property type="nucleotide sequence ID" value="NC_018939.1"/>
</dbReference>
<dbReference type="SMR" id="O25136"/>
<dbReference type="FunCoup" id="O25136">
    <property type="interactions" value="166"/>
</dbReference>
<dbReference type="IntAct" id="O25136">
    <property type="interactions" value="1"/>
</dbReference>
<dbReference type="MINT" id="O25136"/>
<dbReference type="STRING" id="85962.HP_0372"/>
<dbReference type="PaxDb" id="85962-C694_01890"/>
<dbReference type="EnsemblBacteria" id="AAD07441">
    <property type="protein sequence ID" value="AAD07441"/>
    <property type="gene ID" value="HP_0372"/>
</dbReference>
<dbReference type="KEGG" id="heo:C694_01890"/>
<dbReference type="KEGG" id="hpy:HP_0372"/>
<dbReference type="PATRIC" id="fig|85962.47.peg.395"/>
<dbReference type="eggNOG" id="COG0717">
    <property type="taxonomic scope" value="Bacteria"/>
</dbReference>
<dbReference type="InParanoid" id="O25136"/>
<dbReference type="OrthoDB" id="9780956at2"/>
<dbReference type="PhylomeDB" id="O25136"/>
<dbReference type="UniPathway" id="UPA00610">
    <property type="reaction ID" value="UER00665"/>
</dbReference>
<dbReference type="Proteomes" id="UP000000429">
    <property type="component" value="Chromosome"/>
</dbReference>
<dbReference type="GO" id="GO:0008829">
    <property type="term" value="F:dCTP deaminase activity"/>
    <property type="evidence" value="ECO:0000318"/>
    <property type="project" value="GO_Central"/>
</dbReference>
<dbReference type="GO" id="GO:0000166">
    <property type="term" value="F:nucleotide binding"/>
    <property type="evidence" value="ECO:0007669"/>
    <property type="project" value="UniProtKB-KW"/>
</dbReference>
<dbReference type="GO" id="GO:0006226">
    <property type="term" value="P:dUMP biosynthetic process"/>
    <property type="evidence" value="ECO:0007669"/>
    <property type="project" value="UniProtKB-UniPathway"/>
</dbReference>
<dbReference type="GO" id="GO:0006229">
    <property type="term" value="P:dUTP biosynthetic process"/>
    <property type="evidence" value="ECO:0007669"/>
    <property type="project" value="UniProtKB-UniRule"/>
</dbReference>
<dbReference type="GO" id="GO:0015949">
    <property type="term" value="P:nucleobase-containing small molecule interconversion"/>
    <property type="evidence" value="ECO:0000318"/>
    <property type="project" value="GO_Central"/>
</dbReference>
<dbReference type="CDD" id="cd07557">
    <property type="entry name" value="trimeric_dUTPase"/>
    <property type="match status" value="1"/>
</dbReference>
<dbReference type="FunFam" id="2.70.40.10:FF:000006">
    <property type="entry name" value="dCTP deaminase"/>
    <property type="match status" value="1"/>
</dbReference>
<dbReference type="Gene3D" id="2.70.40.10">
    <property type="match status" value="1"/>
</dbReference>
<dbReference type="HAMAP" id="MF_00146">
    <property type="entry name" value="dCTP_deaminase"/>
    <property type="match status" value="1"/>
</dbReference>
<dbReference type="InterPro" id="IPR011962">
    <property type="entry name" value="dCTP_deaminase"/>
</dbReference>
<dbReference type="InterPro" id="IPR036157">
    <property type="entry name" value="dUTPase-like_sf"/>
</dbReference>
<dbReference type="InterPro" id="IPR033704">
    <property type="entry name" value="dUTPase_trimeric"/>
</dbReference>
<dbReference type="NCBIfam" id="TIGR02274">
    <property type="entry name" value="dCTP_deam"/>
    <property type="match status" value="1"/>
</dbReference>
<dbReference type="PANTHER" id="PTHR42680">
    <property type="entry name" value="DCTP DEAMINASE"/>
    <property type="match status" value="1"/>
</dbReference>
<dbReference type="PANTHER" id="PTHR42680:SF3">
    <property type="entry name" value="DCTP DEAMINASE"/>
    <property type="match status" value="1"/>
</dbReference>
<dbReference type="Pfam" id="PF22769">
    <property type="entry name" value="DCD"/>
    <property type="match status" value="1"/>
</dbReference>
<dbReference type="SUPFAM" id="SSF51283">
    <property type="entry name" value="dUTPase-like"/>
    <property type="match status" value="1"/>
</dbReference>
<feature type="chain" id="PRO_0000155990" description="dCTP deaminase">
    <location>
        <begin position="1"/>
        <end position="188"/>
    </location>
</feature>
<feature type="active site" description="Proton donor/acceptor" evidence="1">
    <location>
        <position position="135"/>
    </location>
</feature>
<feature type="binding site" evidence="1">
    <location>
        <begin position="109"/>
        <end position="114"/>
    </location>
    <ligand>
        <name>dCTP</name>
        <dbReference type="ChEBI" id="CHEBI:61481"/>
    </ligand>
</feature>
<feature type="binding site" evidence="1">
    <location>
        <position position="154"/>
    </location>
    <ligand>
        <name>dCTP</name>
        <dbReference type="ChEBI" id="CHEBI:61481"/>
    </ligand>
</feature>
<feature type="binding site" evidence="1">
    <location>
        <position position="168"/>
    </location>
    <ligand>
        <name>dCTP</name>
        <dbReference type="ChEBI" id="CHEBI:61481"/>
    </ligand>
</feature>
<feature type="binding site" evidence="1">
    <location>
        <position position="178"/>
    </location>
    <ligand>
        <name>dCTP</name>
        <dbReference type="ChEBI" id="CHEBI:61481"/>
    </ligand>
</feature>
<evidence type="ECO:0000255" key="1">
    <source>
        <dbReference type="HAMAP-Rule" id="MF_00146"/>
    </source>
</evidence>
<evidence type="ECO:0000305" key="2"/>
<proteinExistence type="inferred from homology"/>
<reference key="1">
    <citation type="journal article" date="1997" name="Nature">
        <title>The complete genome sequence of the gastric pathogen Helicobacter pylori.</title>
        <authorList>
            <person name="Tomb J.-F."/>
            <person name="White O."/>
            <person name="Kerlavage A.R."/>
            <person name="Clayton R.A."/>
            <person name="Sutton G.G."/>
            <person name="Fleischmann R.D."/>
            <person name="Ketchum K.A."/>
            <person name="Klenk H.-P."/>
            <person name="Gill S.R."/>
            <person name="Dougherty B.A."/>
            <person name="Nelson K.E."/>
            <person name="Quackenbush J."/>
            <person name="Zhou L."/>
            <person name="Kirkness E.F."/>
            <person name="Peterson S.N."/>
            <person name="Loftus B.J."/>
            <person name="Richardson D.L."/>
            <person name="Dodson R.J."/>
            <person name="Khalak H.G."/>
            <person name="Glodek A."/>
            <person name="McKenney K."/>
            <person name="FitzGerald L.M."/>
            <person name="Lee N."/>
            <person name="Adams M.D."/>
            <person name="Hickey E.K."/>
            <person name="Berg D.E."/>
            <person name="Gocayne J.D."/>
            <person name="Utterback T.R."/>
            <person name="Peterson J.D."/>
            <person name="Kelley J.M."/>
            <person name="Cotton M.D."/>
            <person name="Weidman J.F."/>
            <person name="Fujii C."/>
            <person name="Bowman C."/>
            <person name="Watthey L."/>
            <person name="Wallin E."/>
            <person name="Hayes W.S."/>
            <person name="Borodovsky M."/>
            <person name="Karp P.D."/>
            <person name="Smith H.O."/>
            <person name="Fraser C.M."/>
            <person name="Venter J.C."/>
        </authorList>
    </citation>
    <scope>NUCLEOTIDE SEQUENCE [LARGE SCALE GENOMIC DNA]</scope>
    <source>
        <strain>ATCC 700392 / 26695</strain>
    </source>
</reference>
<accession>O25136</accession>